<name>SPOK2_PODAN</name>
<sequence length="775" mass="87293">MSDKDRIAQLLRELEEAKAREEEAKARAEEAKARAEEAKARAEEAKAREEEAKAREAQERCERERLQLEHRNTTFLEYLHNCHRHLYNALRLTNTSRYSTGYTKVVGKYYPKRLRPWTYFANVLHPHYFDLVQSICGQRQLFEPANTTKSLGTIISDHLAGNEKAIDRFEVDAVERPVQGILKVLATHKEAGKASICPEFRFSANLRELTQKDDGSSGADDNTSDGSLERRQQAGPNKRPTSKRKYICSNRQPDGVGIRMQPGGGQTHAFIYDYKAAHKVAIEYIRSATAKEHLFHEVVARINDDKLSRDEEVQRREQAEALIAMALTQVFDYMITYGVSYGYVAAGRCLLLLYVDRDDWQTLYCHPCLPADDVGEPTNDWTDRLSHTAVAQLISFCLSSFQSEALEGQSLETALSIAKATLKTWSESYADVAYLGLEPAELSSAPSSQNTDISEYTSKAEPTGRNVALRSQSSCKPAAVLPQSNEHDDEEDHSEPGASRLRLAANKRKRGPSSGGEDGDIAMADSGPTKQYCTQACLLGLKRGKDLDEKCPNVSLHRFDGSSRHPVNAHRFTDMVEQQLLLSPYKGCRMVDFWGKRGAMGWLFKLELLPYGYTFVGKGTLEDRLSRLEHEGRVYAQLDHLQGDVVPVYLGLVRLDRGYILPGLEFVVHMMLMSWAGQTPSASMDDAETLKRESLTAIWNEGVVHGDENRANYLWNAERGRIMIIDFDRAHLSPPPKPRAVSRLSKPKRKRGDSEADAQLFGPLEINRSKHRIRT</sequence>
<reference evidence="8" key="1">
    <citation type="journal article" date="2008" name="Genome Biol.">
        <title>The genome sequence of the model ascomycete fungus Podospora anserina.</title>
        <authorList>
            <person name="Espagne E."/>
            <person name="Lespinet O."/>
            <person name="Malagnac F."/>
            <person name="Da Silva C."/>
            <person name="Jaillon O."/>
            <person name="Porcel B.M."/>
            <person name="Couloux A."/>
            <person name="Aury J.-M."/>
            <person name="Segurens B."/>
            <person name="Poulain J."/>
            <person name="Anthouard V."/>
            <person name="Grossetete S."/>
            <person name="Khalili H."/>
            <person name="Coppin E."/>
            <person name="Dequard-Chablat M."/>
            <person name="Picard M."/>
            <person name="Contamine V."/>
            <person name="Arnaise S."/>
            <person name="Bourdais A."/>
            <person name="Berteaux-Lecellier V."/>
            <person name="Gautheret D."/>
            <person name="de Vries R.P."/>
            <person name="Battaglia E."/>
            <person name="Coutinho P.M."/>
            <person name="Danchin E.G.J."/>
            <person name="Henrissat B."/>
            <person name="El Khoury R."/>
            <person name="Sainsard-Chanet A."/>
            <person name="Boivin A."/>
            <person name="Pinan-Lucarre B."/>
            <person name="Sellem C.H."/>
            <person name="Debuchy R."/>
            <person name="Wincker P."/>
            <person name="Weissenbach J."/>
            <person name="Silar P."/>
        </authorList>
    </citation>
    <scope>NUCLEOTIDE SEQUENCE [LARGE SCALE GENOMIC DNA]</scope>
    <source>
        <strain>S / ATCC MYA-4624 / DSM 980 / FGSC 10383</strain>
    </source>
</reference>
<reference evidence="9" key="2">
    <citation type="journal article" date="2014" name="Genetics">
        <title>Maintaining two mating types: Structure of the mating type locus and its role in heterokaryosis in Podospora anserina.</title>
        <authorList>
            <person name="Grognet P."/>
            <person name="Bidard F."/>
            <person name="Kuchly C."/>
            <person name="Tong L.C.H."/>
            <person name="Coppin E."/>
            <person name="Benkhali J.A."/>
            <person name="Couloux A."/>
            <person name="Wincker P."/>
            <person name="Debuchy R."/>
            <person name="Silar P."/>
        </authorList>
    </citation>
    <scope>GENOME REANNOTATION</scope>
    <source>
        <strain evidence="9">S / ATCC MYA-4624 / DSM 980 / FGSC 10383</strain>
    </source>
</reference>
<reference evidence="7" key="3">
    <citation type="journal article" date="2014" name="PLoS Genet.">
        <title>Genes that bias mendelian segregation.</title>
        <authorList>
            <person name="Grognet P."/>
            <person name="Lalucque H."/>
            <person name="Malagnac F."/>
            <person name="Silar P."/>
        </authorList>
    </citation>
    <scope>FUNCTION</scope>
    <scope>SUBCELLULAR LOCATION</scope>
    <scope>DISRUPTION PHENOTYPE</scope>
    <scope>MUTAGENESIS OF 707-ASP-GLU-708</scope>
</reference>
<reference evidence="7" key="4">
    <citation type="journal article" date="2019" name="Elife">
        <title>Combinations of Spok genes create multiple meiotic drivers in Podospora.</title>
        <authorList>
            <person name="Vogan A.A."/>
            <person name="Ament-Velasquez S.L."/>
            <person name="Granger-Farbos A."/>
            <person name="Svedberg J."/>
            <person name="Bastiaans E."/>
            <person name="Debets A.J."/>
            <person name="Coustou V."/>
            <person name="Yvanne H."/>
            <person name="Clave C."/>
            <person name="Saupe S.J."/>
            <person name="Johannesson H."/>
        </authorList>
    </citation>
    <scope>FUNCTION</scope>
</reference>
<organism evidence="8">
    <name type="scientific">Podospora anserina (strain S / ATCC MYA-4624 / DSM 980 / FGSC 10383)</name>
    <name type="common">Pleurage anserina</name>
    <dbReference type="NCBI Taxonomy" id="515849"/>
    <lineage>
        <taxon>Eukaryota</taxon>
        <taxon>Fungi</taxon>
        <taxon>Dikarya</taxon>
        <taxon>Ascomycota</taxon>
        <taxon>Pezizomycotina</taxon>
        <taxon>Sordariomycetes</taxon>
        <taxon>Sordariomycetidae</taxon>
        <taxon>Sordariales</taxon>
        <taxon>Podosporaceae</taxon>
        <taxon>Podospora</taxon>
        <taxon>Podospora anserina</taxon>
    </lineage>
</organism>
<evidence type="ECO:0000250" key="1">
    <source>
        <dbReference type="UniProtKB" id="A0A447CCJ8"/>
    </source>
</evidence>
<evidence type="ECO:0000255" key="2"/>
<evidence type="ECO:0000256" key="3">
    <source>
        <dbReference type="SAM" id="MobiDB-lite"/>
    </source>
</evidence>
<evidence type="ECO:0000269" key="4">
    <source>
    </source>
</evidence>
<evidence type="ECO:0000269" key="5">
    <source>
    </source>
</evidence>
<evidence type="ECO:0000303" key="6">
    <source>
    </source>
</evidence>
<evidence type="ECO:0000305" key="7"/>
<evidence type="ECO:0000312" key="8">
    <source>
        <dbReference type="EMBL" id="CAP62126.1"/>
    </source>
</evidence>
<evidence type="ECO:0000312" key="9">
    <source>
        <dbReference type="Proteomes" id="UP000001197"/>
    </source>
</evidence>
<proteinExistence type="evidence at protein level"/>
<feature type="chain" id="PRO_0000453036" description="Meiotic driver SPOK2">
    <location>
        <begin position="1"/>
        <end position="775"/>
    </location>
</feature>
<feature type="region of interest" description="Disordered" evidence="3">
    <location>
        <begin position="18"/>
        <end position="51"/>
    </location>
</feature>
<feature type="region of interest" description="Disordered" evidence="3">
    <location>
        <begin position="211"/>
        <end position="249"/>
    </location>
</feature>
<feature type="region of interest" description="Disordered" evidence="3">
    <location>
        <begin position="442"/>
        <end position="525"/>
    </location>
</feature>
<feature type="region of interest" description="Disordered" evidence="3">
    <location>
        <begin position="734"/>
        <end position="761"/>
    </location>
</feature>
<feature type="coiled-coil region" evidence="2">
    <location>
        <begin position="4"/>
        <end position="69"/>
    </location>
</feature>
<feature type="compositionally biased region" description="Polar residues" evidence="3">
    <location>
        <begin position="444"/>
        <end position="457"/>
    </location>
</feature>
<feature type="mutagenesis site" description="Abolishes antidote activity." evidence="4">
    <original>DE</original>
    <variation>AA</variation>
    <location>
        <begin position="707"/>
        <end position="708"/>
    </location>
</feature>
<accession>B2AFA8</accession>
<accession>A0A090CKU7</accession>
<comment type="function">
    <text evidence="1 4 5">Promotes unequal transmission of alleles from the parental zygote to progeny spores by acting as poison/antidote system, leading to poisoning of progeny that do not inherit the allele (PubMed:24830502, PubMed:31347500). May possess DNA nuclease activity that leads to spore killing, and a kinase activity that confers resistance to the nuclease activity (By similarity).</text>
</comment>
<comment type="subcellular location">
    <subcellularLocation>
        <location evidence="4">Cytoplasm</location>
    </subcellularLocation>
    <subcellularLocation>
        <location evidence="4">Nucleus</location>
    </subcellularLocation>
</comment>
<comment type="disruption phenotype">
    <text evidence="4">Sensitises spores to SPOK2 encoded poison.</text>
</comment>
<comment type="sequence caution" evidence="7">
    <conflict type="frameshift">
        <sequence resource="EMBL-CDS" id="CAP62126"/>
    </conflict>
</comment>
<dbReference type="EMBL" id="CU633457">
    <property type="protein sequence ID" value="CAP62126.1"/>
    <property type="status" value="ALT_FRAME"/>
    <property type="molecule type" value="Genomic_DNA"/>
</dbReference>
<dbReference type="EMBL" id="FO904940">
    <property type="protein sequence ID" value="CDP29201.1"/>
    <property type="molecule type" value="Genomic_DNA"/>
</dbReference>
<dbReference type="RefSeq" id="XP_001904347.1">
    <property type="nucleotide sequence ID" value="XM_001904312.1"/>
</dbReference>
<dbReference type="STRING" id="515849.A0A090CKU7"/>
<dbReference type="GeneID" id="6188196"/>
<dbReference type="KEGG" id="pan:PODANSg1366"/>
<dbReference type="VEuPathDB" id="FungiDB:PODANS_5_10"/>
<dbReference type="eggNOG" id="ENOG502SJ0M">
    <property type="taxonomic scope" value="Eukaryota"/>
</dbReference>
<dbReference type="HOGENOM" id="CLU_010672_2_0_1"/>
<dbReference type="InParanoid" id="B2AFA8"/>
<dbReference type="OrthoDB" id="2156052at2759"/>
<dbReference type="Proteomes" id="UP000001197">
    <property type="component" value="Chromosome 5"/>
</dbReference>
<dbReference type="GO" id="GO:0005737">
    <property type="term" value="C:cytoplasm"/>
    <property type="evidence" value="ECO:0000314"/>
    <property type="project" value="UniProtKB"/>
</dbReference>
<dbReference type="GO" id="GO:0005634">
    <property type="term" value="C:nucleus"/>
    <property type="evidence" value="ECO:0000314"/>
    <property type="project" value="UniProtKB"/>
</dbReference>
<dbReference type="GO" id="GO:0004536">
    <property type="term" value="F:DNA nuclease activity"/>
    <property type="evidence" value="ECO:0000250"/>
    <property type="project" value="UniProtKB"/>
</dbReference>
<dbReference type="GO" id="GO:0016301">
    <property type="term" value="F:kinase activity"/>
    <property type="evidence" value="ECO:0000250"/>
    <property type="project" value="UniProtKB"/>
</dbReference>
<dbReference type="GO" id="GO:0090729">
    <property type="term" value="F:toxin activity"/>
    <property type="evidence" value="ECO:0007669"/>
    <property type="project" value="UniProtKB-KW"/>
</dbReference>
<dbReference type="GO" id="GO:0110134">
    <property type="term" value="P:meiotic drive"/>
    <property type="evidence" value="ECO:0000314"/>
    <property type="project" value="UniProtKB"/>
</dbReference>
<dbReference type="InterPro" id="IPR011009">
    <property type="entry name" value="Kinase-like_dom_sf"/>
</dbReference>
<dbReference type="SUPFAM" id="SSF56112">
    <property type="entry name" value="Protein kinase-like (PK-like)"/>
    <property type="match status" value="1"/>
</dbReference>
<keyword id="KW-0175">Coiled coil</keyword>
<keyword id="KW-0963">Cytoplasm</keyword>
<keyword id="KW-0539">Nucleus</keyword>
<keyword id="KW-1185">Reference proteome</keyword>
<keyword id="KW-0800">Toxin</keyword>
<gene>
    <name evidence="6" type="primary">SPOK2</name>
    <name evidence="8" type="ORF">PODANS_5_10</name>
</gene>
<protein>
    <recommendedName>
        <fullName evidence="7">Meiotic driver SPOK2</fullName>
    </recommendedName>
    <alternativeName>
        <fullName evidence="6">Spore killer 2</fullName>
    </alternativeName>
</protein>